<gene>
    <name type="ORF">7</name>
</gene>
<keyword id="KW-1185">Reference proteome</keyword>
<organism>
    <name type="scientific">Fowl adenovirus A serotype 1 (strain CELO / Phelps)</name>
    <name type="common">FAdV-1</name>
    <name type="synonym">Avian adenovirus gal1 (strain Phelps)</name>
    <dbReference type="NCBI Taxonomy" id="10553"/>
    <lineage>
        <taxon>Viruses</taxon>
        <taxon>Varidnaviria</taxon>
        <taxon>Bamfordvirae</taxon>
        <taxon>Preplasmiviricota</taxon>
        <taxon>Tectiliviricetes</taxon>
        <taxon>Rowavirales</taxon>
        <taxon>Adenoviridae</taxon>
        <taxon>Aviadenovirus</taxon>
        <taxon>Fowl aviadenovirus A</taxon>
    </lineage>
</organism>
<accession>Q64769</accession>
<dbReference type="EMBL" id="U46933">
    <property type="protein sequence ID" value="AAC54926.1"/>
    <property type="molecule type" value="Genomic_DNA"/>
</dbReference>
<dbReference type="RefSeq" id="NP_043900.1">
    <property type="nucleotide sequence ID" value="NC_001720.1"/>
</dbReference>
<dbReference type="KEGG" id="vg:1733470"/>
<dbReference type="Proteomes" id="UP000001594">
    <property type="component" value="Segment"/>
</dbReference>
<reference key="1">
    <citation type="journal article" date="1996" name="J. Virol.">
        <title>The complete DNA sequence and genomic organization of the avian adenovirus CELO.</title>
        <authorList>
            <person name="Chiocca S."/>
            <person name="Kurzbauer R."/>
            <person name="Schaffner G."/>
            <person name="Baker A."/>
            <person name="Mautner V."/>
            <person name="Cotten M."/>
        </authorList>
    </citation>
    <scope>NUCLEOTIDE SEQUENCE [LARGE SCALE GENOMIC DNA]</scope>
</reference>
<sequence length="131" mass="14719">MNSMVLELRKKMSSGPDCVIGRPPHILPPQKGVYLLTNISQLIGPVQQNDRGLWRHNGMHTQNLSHHFTGPFICAVIARPINKRTHIGIHVLNQNNELPAIFTIQYPEPPHLTDNPGAVRKSQKSLIPPYN</sequence>
<protein>
    <recommendedName>
        <fullName>Uncharacterized protein ORF7</fullName>
    </recommendedName>
</protein>
<name>YO7_ADEG1</name>
<organismHost>
    <name type="scientific">Galliformes</name>
    <dbReference type="NCBI Taxonomy" id="8976"/>
</organismHost>
<evidence type="ECO:0000256" key="1">
    <source>
        <dbReference type="SAM" id="MobiDB-lite"/>
    </source>
</evidence>
<feature type="chain" id="PRO_0000339008" description="Uncharacterized protein ORF7">
    <location>
        <begin position="1"/>
        <end position="131"/>
    </location>
</feature>
<feature type="region of interest" description="Disordered" evidence="1">
    <location>
        <begin position="112"/>
        <end position="131"/>
    </location>
</feature>
<proteinExistence type="predicted"/>